<protein>
    <recommendedName>
        <fullName evidence="1">Shikimate dehydrogenase (NADP(+))</fullName>
        <shortName evidence="1">SDH</shortName>
        <ecNumber evidence="1">1.1.1.25</ecNumber>
    </recommendedName>
</protein>
<accession>B1YD57</accession>
<dbReference type="EC" id="1.1.1.25" evidence="1"/>
<dbReference type="EMBL" id="CP001014">
    <property type="protein sequence ID" value="ACB39720.1"/>
    <property type="molecule type" value="Genomic_DNA"/>
</dbReference>
<dbReference type="RefSeq" id="WP_012350140.1">
    <property type="nucleotide sequence ID" value="NC_010525.1"/>
</dbReference>
<dbReference type="SMR" id="B1YD57"/>
<dbReference type="STRING" id="444157.Tneu_0781"/>
<dbReference type="GeneID" id="6164307"/>
<dbReference type="KEGG" id="tne:Tneu_0781"/>
<dbReference type="eggNOG" id="arCOG01033">
    <property type="taxonomic scope" value="Archaea"/>
</dbReference>
<dbReference type="HOGENOM" id="CLU_044063_0_1_2"/>
<dbReference type="OrthoDB" id="8744at2157"/>
<dbReference type="UniPathway" id="UPA00053">
    <property type="reaction ID" value="UER00087"/>
</dbReference>
<dbReference type="Proteomes" id="UP000001694">
    <property type="component" value="Chromosome"/>
</dbReference>
<dbReference type="GO" id="GO:0050661">
    <property type="term" value="F:NADP binding"/>
    <property type="evidence" value="ECO:0007669"/>
    <property type="project" value="InterPro"/>
</dbReference>
<dbReference type="GO" id="GO:0004764">
    <property type="term" value="F:shikimate 3-dehydrogenase (NADP+) activity"/>
    <property type="evidence" value="ECO:0007669"/>
    <property type="project" value="UniProtKB-UniRule"/>
</dbReference>
<dbReference type="GO" id="GO:0008652">
    <property type="term" value="P:amino acid biosynthetic process"/>
    <property type="evidence" value="ECO:0007669"/>
    <property type="project" value="UniProtKB-KW"/>
</dbReference>
<dbReference type="GO" id="GO:0009073">
    <property type="term" value="P:aromatic amino acid family biosynthetic process"/>
    <property type="evidence" value="ECO:0007669"/>
    <property type="project" value="UniProtKB-KW"/>
</dbReference>
<dbReference type="GO" id="GO:0009423">
    <property type="term" value="P:chorismate biosynthetic process"/>
    <property type="evidence" value="ECO:0007669"/>
    <property type="project" value="UniProtKB-UniRule"/>
</dbReference>
<dbReference type="GO" id="GO:0019632">
    <property type="term" value="P:shikimate metabolic process"/>
    <property type="evidence" value="ECO:0007669"/>
    <property type="project" value="InterPro"/>
</dbReference>
<dbReference type="Gene3D" id="3.40.50.10860">
    <property type="entry name" value="Leucine Dehydrogenase, chain A, domain 1"/>
    <property type="match status" value="1"/>
</dbReference>
<dbReference type="Gene3D" id="3.40.50.720">
    <property type="entry name" value="NAD(P)-binding Rossmann-like Domain"/>
    <property type="match status" value="1"/>
</dbReference>
<dbReference type="HAMAP" id="MF_00222">
    <property type="entry name" value="Shikimate_DH_AroE"/>
    <property type="match status" value="1"/>
</dbReference>
<dbReference type="InterPro" id="IPR046346">
    <property type="entry name" value="Aminoacid_DH-like_N_sf"/>
</dbReference>
<dbReference type="InterPro" id="IPR036291">
    <property type="entry name" value="NAD(P)-bd_dom_sf"/>
</dbReference>
<dbReference type="InterPro" id="IPR041121">
    <property type="entry name" value="SDH_C"/>
</dbReference>
<dbReference type="InterPro" id="IPR011342">
    <property type="entry name" value="Shikimate_DH"/>
</dbReference>
<dbReference type="InterPro" id="IPR013708">
    <property type="entry name" value="Shikimate_DH-bd_N"/>
</dbReference>
<dbReference type="InterPro" id="IPR022893">
    <property type="entry name" value="Shikimate_DH_fam"/>
</dbReference>
<dbReference type="InterPro" id="IPR006151">
    <property type="entry name" value="Shikm_DH/Glu-tRNA_Rdtase"/>
</dbReference>
<dbReference type="NCBIfam" id="TIGR00507">
    <property type="entry name" value="aroE"/>
    <property type="match status" value="1"/>
</dbReference>
<dbReference type="PANTHER" id="PTHR21089:SF1">
    <property type="entry name" value="BIFUNCTIONAL 3-DEHYDROQUINATE DEHYDRATASE_SHIKIMATE DEHYDROGENASE, CHLOROPLASTIC"/>
    <property type="match status" value="1"/>
</dbReference>
<dbReference type="PANTHER" id="PTHR21089">
    <property type="entry name" value="SHIKIMATE DEHYDROGENASE"/>
    <property type="match status" value="1"/>
</dbReference>
<dbReference type="Pfam" id="PF18317">
    <property type="entry name" value="SDH_C"/>
    <property type="match status" value="1"/>
</dbReference>
<dbReference type="Pfam" id="PF01488">
    <property type="entry name" value="Shikimate_DH"/>
    <property type="match status" value="1"/>
</dbReference>
<dbReference type="Pfam" id="PF08501">
    <property type="entry name" value="Shikimate_dh_N"/>
    <property type="match status" value="1"/>
</dbReference>
<dbReference type="SUPFAM" id="SSF53223">
    <property type="entry name" value="Aminoacid dehydrogenase-like, N-terminal domain"/>
    <property type="match status" value="1"/>
</dbReference>
<dbReference type="SUPFAM" id="SSF51735">
    <property type="entry name" value="NAD(P)-binding Rossmann-fold domains"/>
    <property type="match status" value="1"/>
</dbReference>
<evidence type="ECO:0000255" key="1">
    <source>
        <dbReference type="HAMAP-Rule" id="MF_00222"/>
    </source>
</evidence>
<feature type="chain" id="PRO_1000100148" description="Shikimate dehydrogenase (NADP(+))">
    <location>
        <begin position="1"/>
        <end position="260"/>
    </location>
</feature>
<feature type="active site" description="Proton acceptor" evidence="1">
    <location>
        <position position="64"/>
    </location>
</feature>
<feature type="binding site" evidence="1">
    <location>
        <begin position="14"/>
        <end position="16"/>
    </location>
    <ligand>
        <name>shikimate</name>
        <dbReference type="ChEBI" id="CHEBI:36208"/>
    </ligand>
</feature>
<feature type="binding site" evidence="1">
    <location>
        <position position="60"/>
    </location>
    <ligand>
        <name>shikimate</name>
        <dbReference type="ChEBI" id="CHEBI:36208"/>
    </ligand>
</feature>
<feature type="binding site" evidence="1">
    <location>
        <position position="85"/>
    </location>
    <ligand>
        <name>shikimate</name>
        <dbReference type="ChEBI" id="CHEBI:36208"/>
    </ligand>
</feature>
<feature type="binding site" evidence="1">
    <location>
        <position position="100"/>
    </location>
    <ligand>
        <name>shikimate</name>
        <dbReference type="ChEBI" id="CHEBI:36208"/>
    </ligand>
</feature>
<feature type="binding site" evidence="1">
    <location>
        <begin position="121"/>
        <end position="125"/>
    </location>
    <ligand>
        <name>NADP(+)</name>
        <dbReference type="ChEBI" id="CHEBI:58349"/>
    </ligand>
</feature>
<feature type="binding site" evidence="1">
    <location>
        <begin position="145"/>
        <end position="150"/>
    </location>
    <ligand>
        <name>NADP(+)</name>
        <dbReference type="ChEBI" id="CHEBI:58349"/>
    </ligand>
</feature>
<feature type="binding site" evidence="1">
    <location>
        <position position="201"/>
    </location>
    <ligand>
        <name>NADP(+)</name>
        <dbReference type="ChEBI" id="CHEBI:58349"/>
    </ligand>
</feature>
<feature type="binding site" evidence="1">
    <location>
        <position position="203"/>
    </location>
    <ligand>
        <name>shikimate</name>
        <dbReference type="ChEBI" id="CHEBI:36208"/>
    </ligand>
</feature>
<feature type="binding site" evidence="1">
    <location>
        <position position="225"/>
    </location>
    <ligand>
        <name>NADP(+)</name>
        <dbReference type="ChEBI" id="CHEBI:58349"/>
    </ligand>
</feature>
<comment type="function">
    <text evidence="1">Involved in the biosynthesis of the chorismate, which leads to the biosynthesis of aromatic amino acids. Catalyzes the reversible NADPH linked reduction of 3-dehydroshikimate (DHSA) to yield shikimate (SA).</text>
</comment>
<comment type="catalytic activity">
    <reaction evidence="1">
        <text>shikimate + NADP(+) = 3-dehydroshikimate + NADPH + H(+)</text>
        <dbReference type="Rhea" id="RHEA:17737"/>
        <dbReference type="ChEBI" id="CHEBI:15378"/>
        <dbReference type="ChEBI" id="CHEBI:16630"/>
        <dbReference type="ChEBI" id="CHEBI:36208"/>
        <dbReference type="ChEBI" id="CHEBI:57783"/>
        <dbReference type="ChEBI" id="CHEBI:58349"/>
        <dbReference type="EC" id="1.1.1.25"/>
    </reaction>
</comment>
<comment type="pathway">
    <text evidence="1">Metabolic intermediate biosynthesis; chorismate biosynthesis; chorismate from D-erythrose 4-phosphate and phosphoenolpyruvate: step 4/7.</text>
</comment>
<comment type="subunit">
    <text evidence="1">Homodimer.</text>
</comment>
<comment type="similarity">
    <text evidence="1">Belongs to the shikimate dehydrogenase family.</text>
</comment>
<reference key="1">
    <citation type="submission" date="2008-03" db="EMBL/GenBank/DDBJ databases">
        <title>Complete sequence of Thermoproteus neutrophilus V24Sta.</title>
        <authorList>
            <consortium name="US DOE Joint Genome Institute"/>
            <person name="Copeland A."/>
            <person name="Lucas S."/>
            <person name="Lapidus A."/>
            <person name="Glavina del Rio T."/>
            <person name="Dalin E."/>
            <person name="Tice H."/>
            <person name="Bruce D."/>
            <person name="Goodwin L."/>
            <person name="Pitluck S."/>
            <person name="Sims D."/>
            <person name="Brettin T."/>
            <person name="Detter J.C."/>
            <person name="Han C."/>
            <person name="Kuske C.R."/>
            <person name="Schmutz J."/>
            <person name="Larimer F."/>
            <person name="Land M."/>
            <person name="Hauser L."/>
            <person name="Kyrpides N."/>
            <person name="Mikhailova N."/>
            <person name="Biddle J.F."/>
            <person name="Zhang Z."/>
            <person name="Fitz-Gibbon S.T."/>
            <person name="Lowe T.M."/>
            <person name="Saltikov C."/>
            <person name="House C.H."/>
            <person name="Richardson P."/>
        </authorList>
    </citation>
    <scope>NUCLEOTIDE SEQUENCE [LARGE SCALE GENOMIC DNA]</scope>
    <source>
        <strain>DSM 2338 / JCM 9278 / NBRC 100436 / V24Sta</strain>
    </source>
</reference>
<keyword id="KW-0028">Amino-acid biosynthesis</keyword>
<keyword id="KW-0057">Aromatic amino acid biosynthesis</keyword>
<keyword id="KW-0521">NADP</keyword>
<keyword id="KW-0560">Oxidoreductase</keyword>
<sequence>MYFAVIGTHVRGKSASPAMHNASFKALGVNAVYIAVDVPREELPCFLKLARLNLRGFNVTIPHKEEVVKHLDGVAADARAIGAVNTVLVERNLLVGYNTDASAVYQLAGSHMRGADVLIVGAGGAARAALFAAIKAEARAVYIANRTYERAEALAREFAEKFKREVKAVRSPVKADVVVNATPVYDAMVADLSGASLYVDFAYIPTPRTKMVEEAQRLGIKVVDGVDLLVEQGAQAEKIWLGVEPDRTVMKRAVLEFLGI</sequence>
<name>AROE_PYRNV</name>
<gene>
    <name evidence="1" type="primary">aroE</name>
    <name type="ordered locus">Tneu_0781</name>
</gene>
<proteinExistence type="inferred from homology"/>
<organism>
    <name type="scientific">Pyrobaculum neutrophilum (strain DSM 2338 / JCM 9278 / NBRC 100436 / V24Sta)</name>
    <name type="common">Thermoproteus neutrophilus</name>
    <dbReference type="NCBI Taxonomy" id="444157"/>
    <lineage>
        <taxon>Archaea</taxon>
        <taxon>Thermoproteota</taxon>
        <taxon>Thermoprotei</taxon>
        <taxon>Thermoproteales</taxon>
        <taxon>Thermoproteaceae</taxon>
        <taxon>Pyrobaculum</taxon>
    </lineage>
</organism>